<proteinExistence type="evidence at protein level"/>
<protein>
    <recommendedName>
        <fullName evidence="1">Protein X</fullName>
    </recommendedName>
    <alternativeName>
        <fullName evidence="1">HBx</fullName>
    </alternativeName>
    <alternativeName>
        <fullName evidence="1">Peptide X</fullName>
    </alternativeName>
    <alternativeName>
        <fullName evidence="1">pX</fullName>
    </alternativeName>
</protein>
<evidence type="ECO:0000255" key="1">
    <source>
        <dbReference type="HAMAP-Rule" id="MF_04074"/>
    </source>
</evidence>
<evidence type="ECO:0000269" key="2">
    <source>
    </source>
</evidence>
<evidence type="ECO:0000269" key="3">
    <source>
    </source>
</evidence>
<dbReference type="EMBL" id="D00630">
    <property type="status" value="NOT_ANNOTATED_CDS"/>
    <property type="molecule type" value="Genomic_DNA"/>
</dbReference>
<dbReference type="SMR" id="P0C686"/>
<dbReference type="Proteomes" id="UP000007921">
    <property type="component" value="Genome"/>
</dbReference>
<dbReference type="GO" id="GO:0033650">
    <property type="term" value="C:host cell mitochondrion"/>
    <property type="evidence" value="ECO:0007669"/>
    <property type="project" value="UniProtKB-SubCell"/>
</dbReference>
<dbReference type="GO" id="GO:0042025">
    <property type="term" value="C:host cell nucleus"/>
    <property type="evidence" value="ECO:0007669"/>
    <property type="project" value="UniProtKB-SubCell"/>
</dbReference>
<dbReference type="GO" id="GO:0006351">
    <property type="term" value="P:DNA-templated transcription"/>
    <property type="evidence" value="ECO:0007669"/>
    <property type="project" value="UniProtKB-UniRule"/>
</dbReference>
<dbReference type="GO" id="GO:0085033">
    <property type="term" value="P:symbiont-mediated activation of host NF-kappaB cascade"/>
    <property type="evidence" value="ECO:0007669"/>
    <property type="project" value="UniProtKB-UniRule"/>
</dbReference>
<dbReference type="GO" id="GO:0039592">
    <property type="term" value="P:symbiont-mediated arrest of host cell cycle during G2/M transition"/>
    <property type="evidence" value="ECO:0007669"/>
    <property type="project" value="UniProtKB-UniRule"/>
</dbReference>
<dbReference type="GO" id="GO:0019079">
    <property type="term" value="P:viral genome replication"/>
    <property type="evidence" value="ECO:0007669"/>
    <property type="project" value="UniProtKB-UniRule"/>
</dbReference>
<dbReference type="HAMAP" id="MF_04074">
    <property type="entry name" value="HBV_X"/>
    <property type="match status" value="1"/>
</dbReference>
<dbReference type="InterPro" id="IPR000236">
    <property type="entry name" value="Transactivation_prot_X"/>
</dbReference>
<dbReference type="Pfam" id="PF00739">
    <property type="entry name" value="X"/>
    <property type="match status" value="1"/>
</dbReference>
<organism>
    <name type="scientific">Hepatitis B virus genotype C subtype adr (isolate Japan/Nishioka/1983)</name>
    <name type="common">HBV-C</name>
    <dbReference type="NCBI Taxonomy" id="482133"/>
    <lineage>
        <taxon>Viruses</taxon>
        <taxon>Riboviria</taxon>
        <taxon>Pararnavirae</taxon>
        <taxon>Artverviricota</taxon>
        <taxon>Revtraviricetes</taxon>
        <taxon>Blubervirales</taxon>
        <taxon>Hepadnaviridae</taxon>
        <taxon>Orthohepadnavirus</taxon>
        <taxon>Hepatitis B virus</taxon>
    </lineage>
</organism>
<feature type="chain" id="PRO_0000319905" description="Protein X">
    <location>
        <begin position="1"/>
        <end position="154"/>
    </location>
</feature>
<feature type="region of interest" description="Mitochondrial targeting sequence" evidence="1">
    <location>
        <begin position="68"/>
        <end position="117"/>
    </location>
</feature>
<reference key="1">
    <citation type="journal article" date="1983" name="Nucleic Acids Res.">
        <title>The complete nucleotide sequences of the cloned hepatitis B virus DNA; subtype adr and adw.</title>
        <authorList>
            <person name="Ono Y."/>
            <person name="Onda H."/>
            <person name="Sasada R."/>
            <person name="Igarashi K."/>
            <person name="Sugino Y."/>
            <person name="Nishioka K."/>
        </authorList>
    </citation>
    <scope>NUCLEOTIDE SEQUENCE [GENOMIC DNA]</scope>
</reference>
<reference key="2">
    <citation type="journal article" date="1995" name="EMBO J.">
        <title>Human RPB5, a subunit shared by eukaryotic nuclear RNA polymerases, binds human hepatitis B virus X protein and may play a role in X transactivation.</title>
        <authorList>
            <person name="Cheong J.H."/>
            <person name="Yi M."/>
            <person name="Lin Y."/>
            <person name="Murakami S."/>
        </authorList>
    </citation>
    <scope>INTERACTION WITH HUMAN POLR2E</scope>
</reference>
<reference key="3">
    <citation type="journal article" date="1997" name="J. Biol. Chem.">
        <title>Hepatitis B virus X protein is a transcriptional modulator that communicates with transcription factor IIB and the RNA polymerase II subunit 5.</title>
        <authorList>
            <person name="Lin Y."/>
            <person name="Nomura T."/>
            <person name="Cheong J."/>
            <person name="Dorjsuren D."/>
            <person name="Iida K."/>
            <person name="Murakami S."/>
        </authorList>
    </citation>
    <scope>FUNCTION</scope>
</reference>
<reference key="4">
    <citation type="journal article" date="2003" name="EMBO J.">
        <title>HBXIP functions as a cofactor of survivin in apoptosis suppression.</title>
        <authorList>
            <person name="Marusawa H."/>
            <person name="Matsuzawa S."/>
            <person name="Welsh K."/>
            <person name="Zou H."/>
            <person name="Armstrong R."/>
            <person name="Tamm I."/>
            <person name="Reed J.C."/>
        </authorList>
    </citation>
    <scope>INTERACTION WITH HUMAN HBXIP</scope>
</reference>
<reference key="5">
    <citation type="journal article" date="2001" name="J. Virol. Methods">
        <title>Phosphorylation of purified recombinant hepatitis B virus-X protein by mitogen-activated protein kinase and protein kinase C in vitro.</title>
        <authorList>
            <person name="Lee Y.I."/>
            <person name="Kim S.O."/>
            <person name="Kwon H.J."/>
            <person name="Park J.G."/>
            <person name="Sohn M.J."/>
            <person name="Jeong S.S."/>
        </authorList>
    </citation>
    <scope>PHOSPHORYLATION</scope>
</reference>
<reference key="6">
    <citation type="journal article" date="2001" name="Genes Dev.">
        <title>The hepatitis B virus encoded oncoprotein pX amplifies TGF-beta family signaling through direct interaction with Smad4: potential mechanism of hepatitis B virus-induced liver fibrosis.</title>
        <authorList>
            <person name="Lee D.K."/>
            <person name="Park S.H."/>
            <person name="Yi Y."/>
            <person name="Choi S.G."/>
            <person name="Lee C."/>
            <person name="Parks W.T."/>
            <person name="Cho H."/>
            <person name="de Caestecker M.P."/>
            <person name="Shaul Y."/>
            <person name="Roberts A.B."/>
            <person name="Kim S.J."/>
        </authorList>
    </citation>
    <scope>INTERACTION WITH HUMAN SMAD4</scope>
</reference>
<reference key="7">
    <citation type="journal article" date="2003" name="EMBO J.">
        <title>Pro-apoptotic function of HBV X protein is mediated by interaction with c-FLIP and enhancement of death-inducing signal.</title>
        <authorList>
            <person name="Kim K.H."/>
            <person name="Seong B.L."/>
        </authorList>
    </citation>
    <scope>INTERACTION WITH HUMAN CFLAR</scope>
</reference>
<reference key="8">
    <citation type="journal article" date="2004" name="J. Virol.">
        <title>The enigmatic X gene of hepatitis B virus.</title>
        <authorList>
            <person name="Bouchard M.J."/>
            <person name="Schneider R.J."/>
        </authorList>
    </citation>
    <scope>REVIEW</scope>
</reference>
<reference key="9">
    <citation type="journal article" date="2006" name="Cancer Sci.">
        <title>Molecular functions and biological roles of hepatitis B virus x protein.</title>
        <authorList>
            <person name="Tang H."/>
            <person name="Oishi N."/>
            <person name="Kaneko S."/>
            <person name="Murakami S."/>
        </authorList>
    </citation>
    <scope>REVIEW</scope>
</reference>
<keyword id="KW-1074">Activation of host NF-kappa-B by virus</keyword>
<keyword id="KW-0010">Activator</keyword>
<keyword id="KW-0053">Apoptosis</keyword>
<keyword id="KW-1035">Host cytoplasm</keyword>
<keyword id="KW-1079">Host G2/M cell cycle arrest by virus</keyword>
<keyword id="KW-1045">Host mitochondrion</keyword>
<keyword id="KW-1048">Host nucleus</keyword>
<keyword id="KW-0945">Host-virus interaction</keyword>
<keyword id="KW-1121">Modulation of host cell cycle by virus</keyword>
<keyword id="KW-1185">Reference proteome</keyword>
<keyword id="KW-0804">Transcription</keyword>
<keyword id="KW-0805">Transcription regulation</keyword>
<organismHost>
    <name type="scientific">Homo sapiens</name>
    <name type="common">Human</name>
    <dbReference type="NCBI Taxonomy" id="9606"/>
</organismHost>
<name>X_HBVC1</name>
<gene>
    <name evidence="1" type="primary">X</name>
</gene>
<sequence length="154" mass="16590">MAARVCCQLDPARDVLCLRPVGAESRGRPVSGPFGPLPSPSSSAVPADHGARLSLRGLPVCAFSSAGPCALRFTSARRMETTVNAHQVLPKVLHKRTLGLSAMSTTDLEAYFKDCLFKDWEELGEEIRLMVFVLGGCRHKLVCSPAPCNFFTSA</sequence>
<comment type="function">
    <text evidence="1 3">Multifunctional protein that plays a role in silencing host antiviral defenses and promoting viral transcription. Does not seem to be essential for HBV infection. May be directly involved in development of cirrhosis and liver cancer (hepatocellular carcinoma). Most of cytosolic activities involve modulation of cytosolic calcium. The effect on apoptosis is controversial depending on the cell types in which the studies have been conducted. May induce apoptosis by localizing in mitochondria and causing loss of mitochondrial membrane potential. May also modulate apoptosis by binding host CFLAR, a key regulator of the death-inducing signaling complex (DISC). Promotes viral transcription by using the host E3 ubiquitin ligase DDB1 to target the SMC5-SMC6 complex to proteasomal degradation. This host complex would otherwise bind to viral episomal DNA, and prevents its transcription. Moderately stimulates transcription of many different viral and cellular transcription elements. Promoters and enhancers stimulated by HBx contain DNA binding sites for NF-kappa-B, AP-1, AP-2, c-EBP, ATF/CREB, or the calcium-activated factor NF-AT.</text>
</comment>
<comment type="subunit">
    <text evidence="1">May form homodimer. May interact with host CEBPA, CFLAR, CREB1, DDB1, E4F1, HBXIP, HSPD1/HSP60, NFKBIA, POLR2E and SMAD4. Interacts with host SMC5-SMC6 complex and induces its degradation. Interacts with host TRPC4AP; leading to prevent ubiquitination of TRPC4AP. Interacts with host PLSCR1; this interaction promotes ubiquitination and degradation of HBx and impairs HBx-mediated cell proliferation.</text>
</comment>
<comment type="subcellular location">
    <subcellularLocation>
        <location evidence="1">Host cytoplasm</location>
    </subcellularLocation>
    <subcellularLocation>
        <location evidence="1">Host nucleus</location>
    </subcellularLocation>
    <subcellularLocation>
        <location evidence="1">Host mitochondrion</location>
    </subcellularLocation>
    <text evidence="1">Mainly cytoplasmic as only a fraction is detected in the nucleus. In cytoplasm, a minor fraction associates with mitochondria or proteasomes.</text>
</comment>
<comment type="PTM">
    <text evidence="1 2">A fraction may be phosphorylated in insect cells and HepG2 cells, a human hepatoblastoma cell line. Phosphorylated in vitro by host protein kinase C or mitogen-activated protein kinase. N-acetylated in insect cells.</text>
</comment>
<comment type="similarity">
    <text evidence="1">Belongs to the orthohepadnavirus protein X family.</text>
</comment>
<comment type="caution">
    <text>Transcriptional activities should be taken with a grain of salt. As of 2007, all studies demonstrating in vivo interaction between protein X and transcriptional components were performed with significant overexpression of both proteins and in the absence of viral infection.</text>
</comment>
<accession>P0C686</accession>